<name>PRIO_OVIMU</name>
<gene>
    <name type="primary">PRNP</name>
    <name type="synonym">PRP</name>
</gene>
<reference key="1">
    <citation type="journal article" date="2001" name="Intervirology">
        <title>Comparative analysis of the prion protein open reading frame nucleotide sequences of two wild ruminants, the moufflon and golden takin.</title>
        <authorList>
            <person name="Seo S.W."/>
            <person name="Hara K."/>
            <person name="Kubosaki A."/>
            <person name="Nasu Y."/>
            <person name="Nishimura T."/>
            <person name="Saeki K."/>
            <person name="Matsumoto Y."/>
            <person name="Endo H."/>
            <person name="Onodera T."/>
        </authorList>
    </citation>
    <scope>NUCLEOTIDE SEQUENCE [MRNA]</scope>
</reference>
<sequence>MVKSHIGSWILVLFVAMWSDVGLCKKRPKPGGGWNTGGSRYPGQGSPGGNRYPPQGGGGWGQPHGGGWGQPHGGGWGQPHGGGWGQPHGGGGWGQGGSHSQWNKPSKPKTNMKHVAGAAAAGAVVGGLGGYMLGSAMSRPLIHFGNDYEDRYYRENMYRYPNQVYYRPVDQYSNQNNFVHDCVNITVKQHTVTTTTKGENFTETDIKIMERVVEQMCITQYQRESQAYYQRGASVILFSSPPVILLISFLIFLIVG</sequence>
<proteinExistence type="evidence at transcript level"/>
<comment type="function">
    <text evidence="2 4">Its primary physiological function is unclear. Has cytoprotective activity against internal or environmental stresses. May play a role in neuronal development and synaptic plasticity. May be required for neuronal myelin sheath maintenance. May play a role in iron uptake and iron homeostasis. Soluble oligomers are toxic to cultured neuroblastoma cells and induce apoptosis (in vitro). Association with GPC1 (via its heparan sulfate chains) targets PRNP to lipid rafts. Also provides Cu(2+) or Zn(2+) for the ascorbate-mediated GPC1 deaminase degradation of its heparan sulfate side chains (By similarity).</text>
</comment>
<comment type="subunit">
    <text evidence="2 4">Monomer and homodimer. Has a tendency to aggregate into amyloid fibrils containing a cross-beta spine, formed by a steric zipper of superposed beta-strands. Soluble oligomers may represent an intermediate stage on the path to fibril formation. Copper binding may promote oligomerization. Interacts with GRB2, APP, ERI3/PRNPIP and SYN1. Mislocalized cytosolically exposed PrP interacts with MGRN1; this interaction alters MGRN1 subcellular location and causes lysosomal enlargement. Interacts with KIAA1191.</text>
</comment>
<comment type="subcellular location">
    <subcellularLocation>
        <location evidence="2">Cell membrane</location>
        <topology evidence="2">Lipid-anchor</topology>
        <topology evidence="2">GPI-anchor</topology>
    </subcellularLocation>
    <subcellularLocation>
        <location evidence="4">Golgi apparatus</location>
    </subcellularLocation>
    <text evidence="2">Targeted to lipid rafts via association with the heparan sulfate chains of GPC1. Colocates, in the presence of Cu(2+), to vesicles in para- and perinuclear regions, where both proteins undergo internalization. Heparin displaces PRNP from lipid rafts and promotes endocytosis.</text>
</comment>
<comment type="domain">
    <text evidence="2">The normal, monomeric form has a mainly alpha-helical structure. The disease-associated, protease-resistant form forms amyloid fibrils containing a cross-beta spine, formed by a steric zipper of superposed beta-strands. Disease mutations may favor intermolecular contacts via short beta strands, and may thereby trigger oligomerization.</text>
</comment>
<comment type="domain">
    <text evidence="2">Contains an N-terminal region composed of octamer repeats. At low copper concentrations, the sidechains of His residues from three or four repeats contribute to the binding of a single copper ion. Alternatively, a copper ion can be bound by interaction with the sidechain and backbone amide nitrogen of a single His residue. The observed copper binding stoichiometry suggests that two repeat regions cooperate to stabilize the binding of a single copper ion. At higher copper concentrations, each octamer can bind one copper ion by interactions with the His sidechain and Gly backbone atoms. A mixture of binding types may occur, especially in the case of octamer repeat expansion. Copper binding may stabilize the conformation of this region and may promote oligomerization.</text>
</comment>
<comment type="disease">
    <text evidence="7">Found in high quantity in the brain of humans and animals infected with degenerative neurological diseases such as kuru, Creutzfeldt-Jakob disease (CJD), Gerstmann-Straussler syndrome (GSS), scrapie, bovine spongiform encephalopathy (BSE), transmissible mink encephalopathy (TME), etc.</text>
</comment>
<comment type="similarity">
    <text evidence="7">Belongs to the prion family.</text>
</comment>
<organism>
    <name type="scientific">Ovis aries musimon</name>
    <name type="common">Mouflon</name>
    <dbReference type="NCBI Taxonomy" id="9938"/>
    <lineage>
        <taxon>Eukaryota</taxon>
        <taxon>Metazoa</taxon>
        <taxon>Chordata</taxon>
        <taxon>Craniata</taxon>
        <taxon>Vertebrata</taxon>
        <taxon>Euteleostomi</taxon>
        <taxon>Mammalia</taxon>
        <taxon>Eutheria</taxon>
        <taxon>Laurasiatheria</taxon>
        <taxon>Artiodactyla</taxon>
        <taxon>Ruminantia</taxon>
        <taxon>Pecora</taxon>
        <taxon>Bovidae</taxon>
        <taxon>Caprinae</taxon>
        <taxon>Ovis</taxon>
    </lineage>
</organism>
<evidence type="ECO:0000250" key="1"/>
<evidence type="ECO:0000250" key="2">
    <source>
        <dbReference type="UniProtKB" id="P04156"/>
    </source>
</evidence>
<evidence type="ECO:0000250" key="3">
    <source>
        <dbReference type="UniProtKB" id="P04273"/>
    </source>
</evidence>
<evidence type="ECO:0000250" key="4">
    <source>
        <dbReference type="UniProtKB" id="P04925"/>
    </source>
</evidence>
<evidence type="ECO:0000255" key="5"/>
<evidence type="ECO:0000256" key="6">
    <source>
        <dbReference type="SAM" id="MobiDB-lite"/>
    </source>
</evidence>
<evidence type="ECO:0000305" key="7"/>
<keyword id="KW-0034">Amyloid</keyword>
<keyword id="KW-1003">Cell membrane</keyword>
<keyword id="KW-0186">Copper</keyword>
<keyword id="KW-1015">Disulfide bond</keyword>
<keyword id="KW-0325">Glycoprotein</keyword>
<keyword id="KW-0333">Golgi apparatus</keyword>
<keyword id="KW-0336">GPI-anchor</keyword>
<keyword id="KW-0449">Lipoprotein</keyword>
<keyword id="KW-0472">Membrane</keyword>
<keyword id="KW-0479">Metal-binding</keyword>
<keyword id="KW-0640">Prion</keyword>
<keyword id="KW-0677">Repeat</keyword>
<keyword id="KW-0732">Signal</keyword>
<keyword id="KW-0862">Zinc</keyword>
<accession>Q7JK02</accession>
<feature type="signal peptide" evidence="1">
    <location>
        <begin position="1"/>
        <end position="24"/>
    </location>
</feature>
<feature type="chain" id="PRO_0000025709" description="Major prion protein">
    <location>
        <begin position="25"/>
        <end position="233"/>
    </location>
</feature>
<feature type="propeptide" id="PRO_0000025710" description="Removed in mature form" evidence="5">
    <location>
        <begin position="234"/>
        <end position="256"/>
    </location>
</feature>
<feature type="repeat" description="1">
    <location>
        <begin position="54"/>
        <end position="62"/>
    </location>
</feature>
<feature type="repeat" description="2">
    <location>
        <begin position="63"/>
        <end position="70"/>
    </location>
</feature>
<feature type="repeat" description="3">
    <location>
        <begin position="71"/>
        <end position="78"/>
    </location>
</feature>
<feature type="repeat" description="4">
    <location>
        <begin position="79"/>
        <end position="86"/>
    </location>
</feature>
<feature type="repeat" description="5">
    <location>
        <begin position="87"/>
        <end position="95"/>
    </location>
</feature>
<feature type="region of interest" description="Interaction with GRB2, ERI3 and SYN1" evidence="4">
    <location>
        <begin position="25"/>
        <end position="233"/>
    </location>
</feature>
<feature type="region of interest" description="Disordered" evidence="6">
    <location>
        <begin position="28"/>
        <end position="110"/>
    </location>
</feature>
<feature type="region of interest" description="5 X 8 AA tandem repeats of P-H-G-G-G-W-G-Q">
    <location>
        <begin position="54"/>
        <end position="95"/>
    </location>
</feature>
<feature type="compositionally biased region" description="Gly residues" evidence="6">
    <location>
        <begin position="55"/>
        <end position="97"/>
    </location>
</feature>
<feature type="binding site" evidence="2">
    <location>
        <position position="64"/>
    </location>
    <ligand>
        <name>Cu(2+)</name>
        <dbReference type="ChEBI" id="CHEBI:29036"/>
        <label>1</label>
    </ligand>
</feature>
<feature type="binding site" evidence="2">
    <location>
        <position position="65"/>
    </location>
    <ligand>
        <name>Cu(2+)</name>
        <dbReference type="ChEBI" id="CHEBI:29036"/>
        <label>1</label>
    </ligand>
</feature>
<feature type="binding site" evidence="2">
    <location>
        <position position="66"/>
    </location>
    <ligand>
        <name>Cu(2+)</name>
        <dbReference type="ChEBI" id="CHEBI:29036"/>
        <label>1</label>
    </ligand>
</feature>
<feature type="binding site" evidence="2">
    <location>
        <position position="72"/>
    </location>
    <ligand>
        <name>Cu(2+)</name>
        <dbReference type="ChEBI" id="CHEBI:29036"/>
        <label>2</label>
    </ligand>
</feature>
<feature type="binding site" evidence="2">
    <location>
        <position position="73"/>
    </location>
    <ligand>
        <name>Cu(2+)</name>
        <dbReference type="ChEBI" id="CHEBI:29036"/>
        <label>2</label>
    </ligand>
</feature>
<feature type="binding site" evidence="2">
    <location>
        <position position="74"/>
    </location>
    <ligand>
        <name>Cu(2+)</name>
        <dbReference type="ChEBI" id="CHEBI:29036"/>
        <label>2</label>
    </ligand>
</feature>
<feature type="binding site" evidence="2">
    <location>
        <position position="80"/>
    </location>
    <ligand>
        <name>Cu(2+)</name>
        <dbReference type="ChEBI" id="CHEBI:29036"/>
        <label>3</label>
    </ligand>
</feature>
<feature type="binding site" evidence="2">
    <location>
        <position position="81"/>
    </location>
    <ligand>
        <name>Cu(2+)</name>
        <dbReference type="ChEBI" id="CHEBI:29036"/>
        <label>3</label>
    </ligand>
</feature>
<feature type="binding site" evidence="2">
    <location>
        <position position="82"/>
    </location>
    <ligand>
        <name>Cu(2+)</name>
        <dbReference type="ChEBI" id="CHEBI:29036"/>
        <label>3</label>
    </ligand>
</feature>
<feature type="binding site" evidence="2">
    <location>
        <position position="88"/>
    </location>
    <ligand>
        <name>Cu(2+)</name>
        <dbReference type="ChEBI" id="CHEBI:29036"/>
        <label>4</label>
    </ligand>
</feature>
<feature type="binding site" evidence="2">
    <location>
        <position position="90"/>
    </location>
    <ligand>
        <name>Cu(2+)</name>
        <dbReference type="ChEBI" id="CHEBI:29036"/>
        <label>4</label>
    </ligand>
</feature>
<feature type="binding site" evidence="2">
    <location>
        <position position="91"/>
    </location>
    <ligand>
        <name>Cu(2+)</name>
        <dbReference type="ChEBI" id="CHEBI:29036"/>
        <label>4</label>
    </ligand>
</feature>
<feature type="lipid moiety-binding region" description="GPI-anchor amidated alanine" evidence="5">
    <location>
        <position position="233"/>
    </location>
</feature>
<feature type="glycosylation site" description="N-linked (GlcNAc...) asparagine" evidence="7">
    <location>
        <position position="184"/>
    </location>
</feature>
<feature type="glycosylation site" description="N-linked (GlcNAc...) asparagine" evidence="7">
    <location>
        <position position="200"/>
    </location>
</feature>
<feature type="disulfide bond" evidence="3">
    <location>
        <begin position="182"/>
        <end position="217"/>
    </location>
</feature>
<protein>
    <recommendedName>
        <fullName>Major prion protein</fullName>
        <shortName>PrP</shortName>
    </recommendedName>
    <cdAntigenName>CD230</cdAntigenName>
</protein>
<dbReference type="EMBL" id="AB060288">
    <property type="protein sequence ID" value="BAB69955.1"/>
    <property type="molecule type" value="mRNA"/>
</dbReference>
<dbReference type="EMBL" id="AB060289">
    <property type="protein sequence ID" value="BAB69956.1"/>
    <property type="molecule type" value="mRNA"/>
</dbReference>
<dbReference type="SMR" id="Q7JK02"/>
<dbReference type="GlyCosmos" id="Q7JK02">
    <property type="glycosylation" value="2 sites, No reported glycans"/>
</dbReference>
<dbReference type="GO" id="GO:0005794">
    <property type="term" value="C:Golgi apparatus"/>
    <property type="evidence" value="ECO:0007669"/>
    <property type="project" value="UniProtKB-SubCell"/>
</dbReference>
<dbReference type="GO" id="GO:0005886">
    <property type="term" value="C:plasma membrane"/>
    <property type="evidence" value="ECO:0007669"/>
    <property type="project" value="UniProtKB-SubCell"/>
</dbReference>
<dbReference type="GO" id="GO:0098552">
    <property type="term" value="C:side of membrane"/>
    <property type="evidence" value="ECO:0007669"/>
    <property type="project" value="UniProtKB-KW"/>
</dbReference>
<dbReference type="GO" id="GO:0005507">
    <property type="term" value="F:copper ion binding"/>
    <property type="evidence" value="ECO:0000250"/>
    <property type="project" value="UniProtKB"/>
</dbReference>
<dbReference type="GO" id="GO:0051260">
    <property type="term" value="P:protein homooligomerization"/>
    <property type="evidence" value="ECO:0007669"/>
    <property type="project" value="InterPro"/>
</dbReference>
<dbReference type="FunFam" id="1.10.790.10:FF:000001">
    <property type="entry name" value="Major prion protein"/>
    <property type="match status" value="1"/>
</dbReference>
<dbReference type="Gene3D" id="1.10.790.10">
    <property type="entry name" value="Prion/Doppel protein, beta-ribbon domain"/>
    <property type="match status" value="1"/>
</dbReference>
<dbReference type="InterPro" id="IPR000817">
    <property type="entry name" value="Prion"/>
</dbReference>
<dbReference type="InterPro" id="IPR036924">
    <property type="entry name" value="Prion/Doppel_b-ribbon_dom_sf"/>
</dbReference>
<dbReference type="InterPro" id="IPR022416">
    <property type="entry name" value="Prion/Doppel_prot_b-ribbon_dom"/>
</dbReference>
<dbReference type="InterPro" id="IPR020949">
    <property type="entry name" value="Prion_copper_b_octapeptide"/>
</dbReference>
<dbReference type="InterPro" id="IPR025860">
    <property type="entry name" value="Prion_N"/>
</dbReference>
<dbReference type="PANTHER" id="PTHR15506">
    <property type="entry name" value="DOPPEL PRION"/>
    <property type="match status" value="1"/>
</dbReference>
<dbReference type="PANTHER" id="PTHR15506:SF2">
    <property type="entry name" value="MAJOR PRION PROTEIN"/>
    <property type="match status" value="1"/>
</dbReference>
<dbReference type="Pfam" id="PF00377">
    <property type="entry name" value="Prion"/>
    <property type="match status" value="1"/>
</dbReference>
<dbReference type="Pfam" id="PF11587">
    <property type="entry name" value="Prion_bPrPp"/>
    <property type="match status" value="1"/>
</dbReference>
<dbReference type="Pfam" id="PF03991">
    <property type="entry name" value="Prion_octapep"/>
    <property type="match status" value="1"/>
</dbReference>
<dbReference type="PRINTS" id="PR00341">
    <property type="entry name" value="PRION"/>
</dbReference>
<dbReference type="SMART" id="SM00157">
    <property type="entry name" value="PRP"/>
    <property type="match status" value="1"/>
</dbReference>
<dbReference type="SUPFAM" id="SSF54098">
    <property type="entry name" value="Prion-like"/>
    <property type="match status" value="1"/>
</dbReference>
<dbReference type="PROSITE" id="PS00291">
    <property type="entry name" value="PRION_1"/>
    <property type="match status" value="1"/>
</dbReference>
<dbReference type="PROSITE" id="PS00706">
    <property type="entry name" value="PRION_2"/>
    <property type="match status" value="1"/>
</dbReference>